<feature type="chain" id="PRO_1000060505" description="Large ribosomal subunit protein bL9">
    <location>
        <begin position="1"/>
        <end position="149"/>
    </location>
</feature>
<proteinExistence type="inferred from homology"/>
<gene>
    <name evidence="1" type="primary">rplI</name>
    <name type="ordered locus">BPUM_3705</name>
</gene>
<sequence>MKVIFLKDVKGKGKKGEVKNVADGYAHNFLIKQGLAVEANPTNLSALEGQKNKEKKNAVQELEQAKQLKETLEALTVELTAKSGEGGRLFGSITSKQIADKLQKDHQIKVDKRKIELNDAIRALGYTNVPVKLHPEVQATLKVHVTEQA</sequence>
<keyword id="KW-0687">Ribonucleoprotein</keyword>
<keyword id="KW-0689">Ribosomal protein</keyword>
<keyword id="KW-0694">RNA-binding</keyword>
<keyword id="KW-0699">rRNA-binding</keyword>
<organism>
    <name type="scientific">Bacillus pumilus (strain SAFR-032)</name>
    <dbReference type="NCBI Taxonomy" id="315750"/>
    <lineage>
        <taxon>Bacteria</taxon>
        <taxon>Bacillati</taxon>
        <taxon>Bacillota</taxon>
        <taxon>Bacilli</taxon>
        <taxon>Bacillales</taxon>
        <taxon>Bacillaceae</taxon>
        <taxon>Bacillus</taxon>
    </lineage>
</organism>
<accession>A8FJD2</accession>
<name>RL9_BACP2</name>
<evidence type="ECO:0000255" key="1">
    <source>
        <dbReference type="HAMAP-Rule" id="MF_00503"/>
    </source>
</evidence>
<evidence type="ECO:0000305" key="2"/>
<reference key="1">
    <citation type="journal article" date="2007" name="PLoS ONE">
        <title>Paradoxical DNA repair and peroxide resistance gene conservation in Bacillus pumilus SAFR-032.</title>
        <authorList>
            <person name="Gioia J."/>
            <person name="Yerrapragada S."/>
            <person name="Qin X."/>
            <person name="Jiang H."/>
            <person name="Igboeli O.C."/>
            <person name="Muzny D."/>
            <person name="Dugan-Rocha S."/>
            <person name="Ding Y."/>
            <person name="Hawes A."/>
            <person name="Liu W."/>
            <person name="Perez L."/>
            <person name="Kovar C."/>
            <person name="Dinh H."/>
            <person name="Lee S."/>
            <person name="Nazareth L."/>
            <person name="Blyth P."/>
            <person name="Holder M."/>
            <person name="Buhay C."/>
            <person name="Tirumalai M.R."/>
            <person name="Liu Y."/>
            <person name="Dasgupta I."/>
            <person name="Bokhetache L."/>
            <person name="Fujita M."/>
            <person name="Karouia F."/>
            <person name="Eswara Moorthy P."/>
            <person name="Siefert J."/>
            <person name="Uzman A."/>
            <person name="Buzumbo P."/>
            <person name="Verma A."/>
            <person name="Zwiya H."/>
            <person name="McWilliams B.D."/>
            <person name="Olowu A."/>
            <person name="Clinkenbeard K.D."/>
            <person name="Newcombe D."/>
            <person name="Golebiewski L."/>
            <person name="Petrosino J.F."/>
            <person name="Nicholson W.L."/>
            <person name="Fox G.E."/>
            <person name="Venkateswaran K."/>
            <person name="Highlander S.K."/>
            <person name="Weinstock G.M."/>
        </authorList>
    </citation>
    <scope>NUCLEOTIDE SEQUENCE [LARGE SCALE GENOMIC DNA]</scope>
    <source>
        <strain>SAFR-032</strain>
    </source>
</reference>
<comment type="function">
    <text evidence="1">Binds to the 23S rRNA.</text>
</comment>
<comment type="similarity">
    <text evidence="1">Belongs to the bacterial ribosomal protein bL9 family.</text>
</comment>
<protein>
    <recommendedName>
        <fullName evidence="1">Large ribosomal subunit protein bL9</fullName>
    </recommendedName>
    <alternativeName>
        <fullName evidence="2">50S ribosomal protein L9</fullName>
    </alternativeName>
</protein>
<dbReference type="EMBL" id="CP000813">
    <property type="protein sequence ID" value="ABV64349.1"/>
    <property type="molecule type" value="Genomic_DNA"/>
</dbReference>
<dbReference type="RefSeq" id="WP_012011896.1">
    <property type="nucleotide sequence ID" value="NZ_VEIS01000021.1"/>
</dbReference>
<dbReference type="SMR" id="A8FJD2"/>
<dbReference type="STRING" id="315750.BPUM_3705"/>
<dbReference type="GeneID" id="5622997"/>
<dbReference type="KEGG" id="bpu:BPUM_3705"/>
<dbReference type="eggNOG" id="COG0359">
    <property type="taxonomic scope" value="Bacteria"/>
</dbReference>
<dbReference type="HOGENOM" id="CLU_078938_3_2_9"/>
<dbReference type="OrthoDB" id="9788336at2"/>
<dbReference type="Proteomes" id="UP000001355">
    <property type="component" value="Chromosome"/>
</dbReference>
<dbReference type="GO" id="GO:1990904">
    <property type="term" value="C:ribonucleoprotein complex"/>
    <property type="evidence" value="ECO:0007669"/>
    <property type="project" value="UniProtKB-KW"/>
</dbReference>
<dbReference type="GO" id="GO:0005840">
    <property type="term" value="C:ribosome"/>
    <property type="evidence" value="ECO:0007669"/>
    <property type="project" value="UniProtKB-KW"/>
</dbReference>
<dbReference type="GO" id="GO:0019843">
    <property type="term" value="F:rRNA binding"/>
    <property type="evidence" value="ECO:0007669"/>
    <property type="project" value="UniProtKB-UniRule"/>
</dbReference>
<dbReference type="GO" id="GO:0003735">
    <property type="term" value="F:structural constituent of ribosome"/>
    <property type="evidence" value="ECO:0007669"/>
    <property type="project" value="InterPro"/>
</dbReference>
<dbReference type="GO" id="GO:0006412">
    <property type="term" value="P:translation"/>
    <property type="evidence" value="ECO:0007669"/>
    <property type="project" value="UniProtKB-UniRule"/>
</dbReference>
<dbReference type="FunFam" id="3.10.430.100:FF:000002">
    <property type="entry name" value="50S ribosomal protein L9"/>
    <property type="match status" value="1"/>
</dbReference>
<dbReference type="FunFam" id="3.40.5.10:FF:000002">
    <property type="entry name" value="50S ribosomal protein L9"/>
    <property type="match status" value="1"/>
</dbReference>
<dbReference type="Gene3D" id="3.10.430.100">
    <property type="entry name" value="Ribosomal protein L9, C-terminal domain"/>
    <property type="match status" value="1"/>
</dbReference>
<dbReference type="Gene3D" id="3.40.5.10">
    <property type="entry name" value="Ribosomal protein L9, N-terminal domain"/>
    <property type="match status" value="1"/>
</dbReference>
<dbReference type="HAMAP" id="MF_00503">
    <property type="entry name" value="Ribosomal_bL9"/>
    <property type="match status" value="1"/>
</dbReference>
<dbReference type="InterPro" id="IPR000244">
    <property type="entry name" value="Ribosomal_bL9"/>
</dbReference>
<dbReference type="InterPro" id="IPR009027">
    <property type="entry name" value="Ribosomal_bL9/RNase_H1_N"/>
</dbReference>
<dbReference type="InterPro" id="IPR020594">
    <property type="entry name" value="Ribosomal_bL9_bac/chp"/>
</dbReference>
<dbReference type="InterPro" id="IPR020069">
    <property type="entry name" value="Ribosomal_bL9_C"/>
</dbReference>
<dbReference type="InterPro" id="IPR036791">
    <property type="entry name" value="Ribosomal_bL9_C_sf"/>
</dbReference>
<dbReference type="InterPro" id="IPR020070">
    <property type="entry name" value="Ribosomal_bL9_N"/>
</dbReference>
<dbReference type="InterPro" id="IPR036935">
    <property type="entry name" value="Ribosomal_bL9_N_sf"/>
</dbReference>
<dbReference type="NCBIfam" id="TIGR00158">
    <property type="entry name" value="L9"/>
    <property type="match status" value="1"/>
</dbReference>
<dbReference type="PANTHER" id="PTHR21368">
    <property type="entry name" value="50S RIBOSOMAL PROTEIN L9"/>
    <property type="match status" value="1"/>
</dbReference>
<dbReference type="Pfam" id="PF03948">
    <property type="entry name" value="Ribosomal_L9_C"/>
    <property type="match status" value="1"/>
</dbReference>
<dbReference type="Pfam" id="PF01281">
    <property type="entry name" value="Ribosomal_L9_N"/>
    <property type="match status" value="1"/>
</dbReference>
<dbReference type="SUPFAM" id="SSF55658">
    <property type="entry name" value="L9 N-domain-like"/>
    <property type="match status" value="1"/>
</dbReference>
<dbReference type="SUPFAM" id="SSF55653">
    <property type="entry name" value="Ribosomal protein L9 C-domain"/>
    <property type="match status" value="1"/>
</dbReference>
<dbReference type="PROSITE" id="PS00651">
    <property type="entry name" value="RIBOSOMAL_L9"/>
    <property type="match status" value="1"/>
</dbReference>